<evidence type="ECO:0000255" key="1">
    <source>
        <dbReference type="HAMAP-Rule" id="MF_00031"/>
    </source>
</evidence>
<gene>
    <name evidence="1" type="primary">ruvA</name>
    <name type="ordered locus">FMG_0816</name>
</gene>
<keyword id="KW-0963">Cytoplasm</keyword>
<keyword id="KW-0227">DNA damage</keyword>
<keyword id="KW-0233">DNA recombination</keyword>
<keyword id="KW-0234">DNA repair</keyword>
<keyword id="KW-0238">DNA-binding</keyword>
<keyword id="KW-1185">Reference proteome</keyword>
<dbReference type="EMBL" id="AP008971">
    <property type="protein sequence ID" value="BAG08234.1"/>
    <property type="molecule type" value="Genomic_DNA"/>
</dbReference>
<dbReference type="RefSeq" id="WP_002838203.1">
    <property type="nucleotide sequence ID" value="NC_010376.1"/>
</dbReference>
<dbReference type="SMR" id="B0S1J4"/>
<dbReference type="STRING" id="334413.FMG_0816"/>
<dbReference type="KEGG" id="fma:FMG_0816"/>
<dbReference type="eggNOG" id="COG0632">
    <property type="taxonomic scope" value="Bacteria"/>
</dbReference>
<dbReference type="HOGENOM" id="CLU_087936_2_1_9"/>
<dbReference type="Proteomes" id="UP000001319">
    <property type="component" value="Chromosome"/>
</dbReference>
<dbReference type="GO" id="GO:0005737">
    <property type="term" value="C:cytoplasm"/>
    <property type="evidence" value="ECO:0007669"/>
    <property type="project" value="UniProtKB-SubCell"/>
</dbReference>
<dbReference type="GO" id="GO:0048476">
    <property type="term" value="C:Holliday junction resolvase complex"/>
    <property type="evidence" value="ECO:0007669"/>
    <property type="project" value="UniProtKB-UniRule"/>
</dbReference>
<dbReference type="GO" id="GO:0005524">
    <property type="term" value="F:ATP binding"/>
    <property type="evidence" value="ECO:0007669"/>
    <property type="project" value="InterPro"/>
</dbReference>
<dbReference type="GO" id="GO:0000400">
    <property type="term" value="F:four-way junction DNA binding"/>
    <property type="evidence" value="ECO:0007669"/>
    <property type="project" value="UniProtKB-UniRule"/>
</dbReference>
<dbReference type="GO" id="GO:0009378">
    <property type="term" value="F:four-way junction helicase activity"/>
    <property type="evidence" value="ECO:0007669"/>
    <property type="project" value="InterPro"/>
</dbReference>
<dbReference type="GO" id="GO:0006310">
    <property type="term" value="P:DNA recombination"/>
    <property type="evidence" value="ECO:0007669"/>
    <property type="project" value="UniProtKB-UniRule"/>
</dbReference>
<dbReference type="GO" id="GO:0006281">
    <property type="term" value="P:DNA repair"/>
    <property type="evidence" value="ECO:0007669"/>
    <property type="project" value="UniProtKB-UniRule"/>
</dbReference>
<dbReference type="Gene3D" id="1.10.150.20">
    <property type="entry name" value="5' to 3' exonuclease, C-terminal subdomain"/>
    <property type="match status" value="1"/>
</dbReference>
<dbReference type="Gene3D" id="2.40.50.140">
    <property type="entry name" value="Nucleic acid-binding proteins"/>
    <property type="match status" value="1"/>
</dbReference>
<dbReference type="HAMAP" id="MF_00031">
    <property type="entry name" value="DNA_HJ_migration_RuvA"/>
    <property type="match status" value="1"/>
</dbReference>
<dbReference type="InterPro" id="IPR013849">
    <property type="entry name" value="DNA_helicase_Holl-junc_RuvA_I"/>
</dbReference>
<dbReference type="InterPro" id="IPR003583">
    <property type="entry name" value="Hlx-hairpin-Hlx_DNA-bd_motif"/>
</dbReference>
<dbReference type="InterPro" id="IPR012340">
    <property type="entry name" value="NA-bd_OB-fold"/>
</dbReference>
<dbReference type="InterPro" id="IPR000085">
    <property type="entry name" value="RuvA"/>
</dbReference>
<dbReference type="InterPro" id="IPR010994">
    <property type="entry name" value="RuvA_2-like"/>
</dbReference>
<dbReference type="InterPro" id="IPR036267">
    <property type="entry name" value="RuvA_C_sf"/>
</dbReference>
<dbReference type="NCBIfam" id="TIGR00084">
    <property type="entry name" value="ruvA"/>
    <property type="match status" value="1"/>
</dbReference>
<dbReference type="Pfam" id="PF14520">
    <property type="entry name" value="HHH_5"/>
    <property type="match status" value="1"/>
</dbReference>
<dbReference type="Pfam" id="PF01330">
    <property type="entry name" value="RuvA_N"/>
    <property type="match status" value="1"/>
</dbReference>
<dbReference type="SMART" id="SM00278">
    <property type="entry name" value="HhH1"/>
    <property type="match status" value="2"/>
</dbReference>
<dbReference type="SUPFAM" id="SSF46929">
    <property type="entry name" value="DNA helicase RuvA subunit, C-terminal domain"/>
    <property type="match status" value="1"/>
</dbReference>
<dbReference type="SUPFAM" id="SSF50249">
    <property type="entry name" value="Nucleic acid-binding proteins"/>
    <property type="match status" value="1"/>
</dbReference>
<dbReference type="SUPFAM" id="SSF47781">
    <property type="entry name" value="RuvA domain 2-like"/>
    <property type="match status" value="1"/>
</dbReference>
<comment type="function">
    <text evidence="1">The RuvA-RuvB-RuvC complex processes Holliday junction (HJ) DNA during genetic recombination and DNA repair, while the RuvA-RuvB complex plays an important role in the rescue of blocked DNA replication forks via replication fork reversal (RFR). RuvA specifically binds to HJ cruciform DNA, conferring on it an open structure. The RuvB hexamer acts as an ATP-dependent pump, pulling dsDNA into and through the RuvAB complex. HJ branch migration allows RuvC to scan DNA until it finds its consensus sequence, where it cleaves and resolves the cruciform DNA.</text>
</comment>
<comment type="subunit">
    <text evidence="1">Homotetramer. Forms an RuvA(8)-RuvB(12)-Holliday junction (HJ) complex. HJ DNA is sandwiched between 2 RuvA tetramers; dsDNA enters through RuvA and exits via RuvB. An RuvB hexamer assembles on each DNA strand where it exits the tetramer. Each RuvB hexamer is contacted by two RuvA subunits (via domain III) on 2 adjacent RuvB subunits; this complex drives branch migration. In the full resolvosome a probable DNA-RuvA(4)-RuvB(12)-RuvC(2) complex forms which resolves the HJ.</text>
</comment>
<comment type="subcellular location">
    <subcellularLocation>
        <location evidence="1">Cytoplasm</location>
    </subcellularLocation>
</comment>
<comment type="domain">
    <text evidence="1">Has three domains with a flexible linker between the domains II and III and assumes an 'L' shape. Domain III is highly mobile and contacts RuvB.</text>
</comment>
<comment type="similarity">
    <text evidence="1">Belongs to the RuvA family.</text>
</comment>
<feature type="chain" id="PRO_1000090318" description="Holliday junction branch migration complex subunit RuvA">
    <location>
        <begin position="1"/>
        <end position="198"/>
    </location>
</feature>
<feature type="region of interest" description="Domain I" evidence="1">
    <location>
        <begin position="1"/>
        <end position="63"/>
    </location>
</feature>
<feature type="region of interest" description="Domain II" evidence="1">
    <location>
        <begin position="64"/>
        <end position="142"/>
    </location>
</feature>
<feature type="region of interest" description="Flexible linker" evidence="1">
    <location>
        <begin position="143"/>
        <end position="153"/>
    </location>
</feature>
<feature type="region of interest" description="Domain III" evidence="1">
    <location>
        <begin position="153"/>
        <end position="198"/>
    </location>
</feature>
<organism>
    <name type="scientific">Finegoldia magna (strain ATCC 29328 / DSM 20472 / WAL 2508)</name>
    <name type="common">Peptostreptococcus magnus</name>
    <dbReference type="NCBI Taxonomy" id="334413"/>
    <lineage>
        <taxon>Bacteria</taxon>
        <taxon>Bacillati</taxon>
        <taxon>Bacillota</taxon>
        <taxon>Tissierellia</taxon>
        <taxon>Tissierellales</taxon>
        <taxon>Peptoniphilaceae</taxon>
        <taxon>Finegoldia</taxon>
    </lineage>
</organism>
<proteinExistence type="inferred from homology"/>
<accession>B0S1J4</accession>
<sequence length="198" mass="22633">MYSYIIGVITEVHENYIVLENNNIGYKIFITDFFRDNVSAFDEYKVYTEFVEREDASILYGFSSQKERELFNLLTDVTSIGPKYAMNILSTMTVDECKTAIITDDIKLLTQAPGVGKKTASRIILELKEKIEKDFVPSEKPVNKEVKRSNDSEFAREALLQLGYFKNDVDAFIENTDISGLSIEDIMKKAMKSLDSSR</sequence>
<reference key="1">
    <citation type="journal article" date="2008" name="DNA Res.">
        <title>Complete genome sequence of Finegoldia magna, an anaerobic opportunistic pathogen.</title>
        <authorList>
            <person name="Goto T."/>
            <person name="Yamashita A."/>
            <person name="Hirakawa H."/>
            <person name="Matsutani M."/>
            <person name="Todo K."/>
            <person name="Ohshima K."/>
            <person name="Toh H."/>
            <person name="Miyamoto K."/>
            <person name="Kuhara S."/>
            <person name="Hattori M."/>
            <person name="Shimizu T."/>
            <person name="Akimoto S."/>
        </authorList>
    </citation>
    <scope>NUCLEOTIDE SEQUENCE [LARGE SCALE GENOMIC DNA]</scope>
    <source>
        <strain>ATCC 29328 / DSM 20472 / WAL 2508</strain>
    </source>
</reference>
<name>RUVA_FINM2</name>
<protein>
    <recommendedName>
        <fullName evidence="1">Holliday junction branch migration complex subunit RuvA</fullName>
    </recommendedName>
</protein>